<feature type="chain" id="PRO_0000083521" description="Dynactin subunit 1">
    <location>
        <begin position="1"/>
        <end position="1224"/>
    </location>
</feature>
<feature type="domain" description="CAP-Gly" evidence="4">
    <location>
        <begin position="49"/>
        <end position="91"/>
    </location>
</feature>
<feature type="region of interest" description="Disordered" evidence="5">
    <location>
        <begin position="1"/>
        <end position="30"/>
    </location>
</feature>
<feature type="region of interest" description="Disordered" evidence="5">
    <location>
        <begin position="100"/>
        <end position="217"/>
    </location>
</feature>
<feature type="region of interest" description="Disordered" evidence="5">
    <location>
        <begin position="374"/>
        <end position="402"/>
    </location>
</feature>
<feature type="region of interest" description="Disordered" evidence="5">
    <location>
        <begin position="888"/>
        <end position="918"/>
    </location>
</feature>
<feature type="region of interest" description="Disordered" evidence="5">
    <location>
        <begin position="1203"/>
        <end position="1224"/>
    </location>
</feature>
<feature type="coiled-coil region" evidence="3">
    <location>
        <begin position="205"/>
        <end position="540"/>
    </location>
</feature>
<feature type="coiled-coil region" evidence="3">
    <location>
        <begin position="936"/>
        <end position="1042"/>
    </location>
</feature>
<feature type="coiled-coil region" evidence="3">
    <location>
        <begin position="1081"/>
        <end position="1117"/>
    </location>
</feature>
<feature type="compositionally biased region" description="Basic residues" evidence="5">
    <location>
        <begin position="1"/>
        <end position="10"/>
    </location>
</feature>
<feature type="compositionally biased region" description="Basic residues" evidence="5">
    <location>
        <begin position="117"/>
        <end position="146"/>
    </location>
</feature>
<feature type="compositionally biased region" description="Low complexity" evidence="5">
    <location>
        <begin position="148"/>
        <end position="180"/>
    </location>
</feature>
<feature type="compositionally biased region" description="Basic and acidic residues" evidence="5">
    <location>
        <begin position="207"/>
        <end position="217"/>
    </location>
</feature>
<feature type="compositionally biased region" description="Low complexity" evidence="5">
    <location>
        <begin position="1204"/>
        <end position="1224"/>
    </location>
</feature>
<feature type="helix" evidence="8">
    <location>
        <begin position="435"/>
        <end position="530"/>
    </location>
</feature>
<gene>
    <name type="primary">DCTN1</name>
</gene>
<sequence>MAQSRRHPHGRASSAGPRMSTEASSKPLKVGSRVEVIGKGHRGTVAYVGATLXATGKWVGVILDEAKGKNDGTVQGRKYFTCEENHGIFVRQSQIQVFEDGADTTSPETPESAALKVPKRHSRXAAKGSKLRGAKPKKTTARRPKPTRTPTSAPSSGTAGPSGSASASGGEMSSSEPSTPAQTPLVAPVIPSPSLTSPVAPMVPSPTKEEENLRSQVRDLEEKLETLKIKRNEDKAKLKELEKYKIQLEQVQEWKSKMQEQQADLQRRLKEAKKEAKDALEAKERYMEEMADTADAIEMATLDKEMAEERAESLQQEVDSLKEKVEYLTMDLEILKHEIEEKGSDGAASSYQVKQLEEQNARLKEALVRMRDLSASEKQEHVKLQKQMEKKNTELESLRQQREKLQEEVKQAEKTVDELKEQVDAALGAEEMVETLTERNLDLEEKVRELRETVGDLEAMNEMNDELQENARETELELREQLDLAAARVREAEKRVEAAQETVADYQQTIKKYRELTAHLQDVNRELMSQQEASAEKQQQPPPEIFDFKIKFAETKAHAKAIEMELRQMEVQQANRHVSLLTSFMPDSFLRHGGDHDCILVLLLIPRLICKADVISKQAQEKFELNENCTARAGLRGAAGEQLSFAAGLVYSLSLLQATLHKYEQALNKCSVEVYKKVGMLYPEMSVHERSLDFLIELLHKDQLDETVNVEPLTKAIKYYQHLYSIHLAEQAEDCTMQLADHIKFTQSALDCMGVEVCRLRAFLQAGQEASDLAILLKDLETSCSDIRQFCKKIRRRMPGTDAPGIPAALGFGQQVSDTLLDCRKHLTWVVAVLQEVAAAGAQLIAPLAENGAAGGEAGGLGLQSQRADLQRSGHQPLRVPAPVLQHPHCHHEQDATAMQEGEYDADRPQSKPTPPAELRAAALRAEITDAEGLGLKLEDRETVIKELKKSLKIKGEELSEANVRLSLLEKKLDSASKDADDRVEKIQTKLDETQTLLKKKEKEFEETMDALQADIDQLESEKVELKQRLNNQSKRTIEGLRGAPASGVASIVSGIAGEEQQRGVGAGQAAGGSAGPVQVKDSPLLLQQIEALQLSIRHLKNENNRLKGAQMKLELAGLKPLQVAKVSLPQSKQGEGPATLTLYRKSTQLLETLYQMSTNAKVVDTKQTKSGRSGARLLEQTARLWAMKGSIEALRTRPCGRWCSSSRARASPPASACSPPRPS</sequence>
<comment type="function">
    <text evidence="1 2">Part of the dynactin complex that activates the molecular motor dynein for ultra-processive transport along microtubules (By similarity). Plays a key role in dynein-mediated retrograde transport of vesicles and organelles along microtubules by recruiting and tethering dynein to microtubules. Binds to both dynein and microtubules providing a link between specific cargos, microtubules and dynein. Essential for targeting dynein to microtubule plus ends, recruiting dynein to membranous cargos and enhancing dynein processivity (the ability to move along a microtubule for a long distance without falling off the track). Can also act as a brake to slow the dynein motor during motility along the microtubule. Can regulate microtubule stability by promoting microtubule formation, nucleation and polymerization and by inhibiting microtubule catastrophe in neurons. Inhibits microtubule catastrophe by binding both to microtubules and to tubulin, leading to enhanced microtubule stability along the axon. Plays a role in metaphase spindle orientation. Plays a role in centriole cohesion and subdistal appendage organization and function. Its recruitment to the centriole in a KIF3A-dependent manner is essential for the maintenance of centriole cohesion and the formation of subdistal appendage. Also required for microtubule anchoring at the mother centriole. Plays a role in primary cilia formation (By similarity).</text>
</comment>
<comment type="subunit">
    <text evidence="1 2">Monomer and homodimer (By similarity). Subunit of dynactin, a multiprotein complex part of a tripartite complex with dynein and a adapter, such as BICDL1, BICD2 or HOOK3. The dynactin complex is built around ACTR1A/ACTB filament and consists of an actin-related filament composed of a shoulder domain, a pointed end and a barbed end. Its length is defined by its flexible shoulder domain. The soulder is composed of 2 DCTN1 subunits, 4 DCTN2 and 2 DCTN3. DCTN1/p150(glued) binds directly to microtubules and to cytoplasmic dynein (By similarity).</text>
</comment>
<comment type="subcellular location">
    <subcellularLocation>
        <location evidence="6">Cytoplasm</location>
    </subcellularLocation>
    <subcellularLocation>
        <location evidence="6">Cytoplasm</location>
        <location evidence="6">Cytoskeleton</location>
    </subcellularLocation>
    <subcellularLocation>
        <location evidence="6">Cytoplasm</location>
        <location evidence="6">Cytoskeleton</location>
        <location evidence="6">Microtubule organizing center</location>
        <location evidence="6">Centrosome</location>
    </subcellularLocation>
    <subcellularLocation>
        <location evidence="2">Cytoplasm</location>
        <location evidence="2">Cytoskeleton</location>
        <location evidence="2">Microtubule organizing center</location>
        <location evidence="2">Centrosome</location>
        <location evidence="2">Centriole</location>
    </subcellularLocation>
    <subcellularLocation>
        <location evidence="2">Cytoplasm</location>
        <location evidence="2">Cytoskeleton</location>
        <location evidence="2">Spindle</location>
    </subcellularLocation>
    <subcellularLocation>
        <location evidence="2">Cytoplasm</location>
        <location evidence="2">Cell cortex</location>
    </subcellularLocation>
    <text evidence="2">Localizes to microtubule plus ends. Localizes preferentially to tyrosinated microtubules than to detyrosinated microtubules.</text>
</comment>
<comment type="alternative products">
    <event type="alternative splicing"/>
    <isoform>
        <id>P35458-1</id>
        <name>1</name>
        <sequence type="displayed"/>
    </isoform>
    <text>At least 3 isoforms are produced.</text>
</comment>
<comment type="tissue specificity">
    <text evidence="6">Ubiquitously expressed.</text>
</comment>
<comment type="similarity">
    <text evidence="7">Belongs to the dynactin 150 kDa subunit family.</text>
</comment>
<keyword id="KW-0002">3D-structure</keyword>
<keyword id="KW-0025">Alternative splicing</keyword>
<keyword id="KW-0131">Cell cycle</keyword>
<keyword id="KW-0132">Cell division</keyword>
<keyword id="KW-0175">Coiled coil</keyword>
<keyword id="KW-0963">Cytoplasm</keyword>
<keyword id="KW-0206">Cytoskeleton</keyword>
<keyword id="KW-0243">Dynein</keyword>
<keyword id="KW-0493">Microtubule</keyword>
<keyword id="KW-0498">Mitosis</keyword>
<keyword id="KW-1185">Reference proteome</keyword>
<organism>
    <name type="scientific">Gallus gallus</name>
    <name type="common">Chicken</name>
    <dbReference type="NCBI Taxonomy" id="9031"/>
    <lineage>
        <taxon>Eukaryota</taxon>
        <taxon>Metazoa</taxon>
        <taxon>Chordata</taxon>
        <taxon>Craniata</taxon>
        <taxon>Vertebrata</taxon>
        <taxon>Euteleostomi</taxon>
        <taxon>Archelosauria</taxon>
        <taxon>Archosauria</taxon>
        <taxon>Dinosauria</taxon>
        <taxon>Saurischia</taxon>
        <taxon>Theropoda</taxon>
        <taxon>Coelurosauria</taxon>
        <taxon>Aves</taxon>
        <taxon>Neognathae</taxon>
        <taxon>Galloanserae</taxon>
        <taxon>Galliformes</taxon>
        <taxon>Phasianidae</taxon>
        <taxon>Phasianinae</taxon>
        <taxon>Gallus</taxon>
    </lineage>
</organism>
<name>DCTN1_CHICK</name>
<accession>P35458</accession>
<evidence type="ECO:0000250" key="1">
    <source>
        <dbReference type="UniProtKB" id="A0A287B8J2"/>
    </source>
</evidence>
<evidence type="ECO:0000250" key="2">
    <source>
        <dbReference type="UniProtKB" id="Q14203"/>
    </source>
</evidence>
<evidence type="ECO:0000255" key="3"/>
<evidence type="ECO:0000255" key="4">
    <source>
        <dbReference type="PROSITE-ProRule" id="PRU00045"/>
    </source>
</evidence>
<evidence type="ECO:0000256" key="5">
    <source>
        <dbReference type="SAM" id="MobiDB-lite"/>
    </source>
</evidence>
<evidence type="ECO:0000269" key="6">
    <source>
    </source>
</evidence>
<evidence type="ECO:0000305" key="7"/>
<evidence type="ECO:0007829" key="8">
    <source>
        <dbReference type="PDB" id="4RFX"/>
    </source>
</evidence>
<protein>
    <recommendedName>
        <fullName>Dynactin subunit 1</fullName>
    </recommendedName>
    <alternativeName>
        <fullName>150 kDa dynein-associated polypeptide</fullName>
    </alternativeName>
    <alternativeName>
        <fullName>DAP-150</fullName>
        <shortName>DP-150</shortName>
    </alternativeName>
    <alternativeName>
        <fullName>p150-glued</fullName>
    </alternativeName>
</protein>
<reference key="1">
    <citation type="submission" date="1999-10" db="EMBL/GenBank/DDBJ databases">
        <authorList>
            <person name="Cleveland D.W."/>
        </authorList>
    </citation>
    <scope>NUCLEOTIDE SEQUENCE [MRNA]</scope>
</reference>
<reference key="2">
    <citation type="journal article" date="1991" name="J. Cell Biol.">
        <title>Dynactin, a conserved, ubiquitously expressed component of an activator of vesicle motility mediated by cytoplasmic dynein.</title>
        <authorList>
            <person name="Gill S.R."/>
            <person name="Schroer T.A."/>
            <person name="Szilak I."/>
            <person name="Steuer E.R."/>
            <person name="Sheetz M.P."/>
            <person name="Cleveland D.W."/>
        </authorList>
    </citation>
    <scope>NUCLEOTIDE SEQUENCE [MRNA] OF 172-1224</scope>
    <scope>SUBCELLULAR LOCATION</scope>
    <scope>TISSUE SPECIFICITY</scope>
    <source>
        <tissue>Embryonic brain</tissue>
    </source>
</reference>
<dbReference type="EMBL" id="X62773">
    <property type="protein sequence ID" value="CAA44617.2"/>
    <property type="molecule type" value="mRNA"/>
</dbReference>
<dbReference type="PIR" id="A41642">
    <property type="entry name" value="A41642"/>
</dbReference>
<dbReference type="RefSeq" id="NP_001026538.1">
    <property type="nucleotide sequence ID" value="NM_001031367.1"/>
</dbReference>
<dbReference type="PDB" id="4RFX">
    <property type="method" value="X-ray"/>
    <property type="resolution" value="2.90 A"/>
    <property type="chains" value="A/B/C/D/E=412-533"/>
</dbReference>
<dbReference type="PDBsum" id="4RFX"/>
<dbReference type="SMR" id="P35458"/>
<dbReference type="FunCoup" id="P35458">
    <property type="interactions" value="2588"/>
</dbReference>
<dbReference type="STRING" id="9031.ENSGALP00000074144"/>
<dbReference type="GlyGen" id="P35458">
    <property type="glycosylation" value="1 site"/>
</dbReference>
<dbReference type="PaxDb" id="9031-ENSGALP00000041577"/>
<dbReference type="KEGG" id="gga:426238"/>
<dbReference type="VEuPathDB" id="HostDB:geneid_426238"/>
<dbReference type="InParanoid" id="P35458"/>
<dbReference type="OrthoDB" id="2130750at2759"/>
<dbReference type="PhylomeDB" id="P35458"/>
<dbReference type="PRO" id="PR:P35458"/>
<dbReference type="Proteomes" id="UP000000539">
    <property type="component" value="Unassembled WGS sequence"/>
</dbReference>
<dbReference type="GO" id="GO:0030424">
    <property type="term" value="C:axon"/>
    <property type="evidence" value="ECO:0000318"/>
    <property type="project" value="GO_Central"/>
</dbReference>
<dbReference type="GO" id="GO:0005938">
    <property type="term" value="C:cell cortex"/>
    <property type="evidence" value="ECO:0000250"/>
    <property type="project" value="UniProtKB"/>
</dbReference>
<dbReference type="GO" id="GO:0099738">
    <property type="term" value="C:cell cortex region"/>
    <property type="evidence" value="ECO:0000250"/>
    <property type="project" value="UniProtKB"/>
</dbReference>
<dbReference type="GO" id="GO:0005814">
    <property type="term" value="C:centriole"/>
    <property type="evidence" value="ECO:0000250"/>
    <property type="project" value="UniProtKB"/>
</dbReference>
<dbReference type="GO" id="GO:0005813">
    <property type="term" value="C:centrosome"/>
    <property type="evidence" value="ECO:0000250"/>
    <property type="project" value="UniProtKB"/>
</dbReference>
<dbReference type="GO" id="GO:0030286">
    <property type="term" value="C:dynein complex"/>
    <property type="evidence" value="ECO:0007669"/>
    <property type="project" value="UniProtKB-KW"/>
</dbReference>
<dbReference type="GO" id="GO:0000776">
    <property type="term" value="C:kinetochore"/>
    <property type="evidence" value="ECO:0000250"/>
    <property type="project" value="UniProtKB"/>
</dbReference>
<dbReference type="GO" id="GO:0005874">
    <property type="term" value="C:microtubule"/>
    <property type="evidence" value="ECO:0000250"/>
    <property type="project" value="UniProtKB"/>
</dbReference>
<dbReference type="GO" id="GO:0005875">
    <property type="term" value="C:microtubule associated complex"/>
    <property type="evidence" value="ECO:0000318"/>
    <property type="project" value="GO_Central"/>
</dbReference>
<dbReference type="GO" id="GO:0035371">
    <property type="term" value="C:microtubule plus-end"/>
    <property type="evidence" value="ECO:0000250"/>
    <property type="project" value="UniProtKB"/>
</dbReference>
<dbReference type="GO" id="GO:0000922">
    <property type="term" value="C:spindle pole"/>
    <property type="evidence" value="ECO:0000318"/>
    <property type="project" value="GO_Central"/>
</dbReference>
<dbReference type="GO" id="GO:0008017">
    <property type="term" value="F:microtubule binding"/>
    <property type="evidence" value="ECO:0000250"/>
    <property type="project" value="UniProtKB"/>
</dbReference>
<dbReference type="GO" id="GO:0051301">
    <property type="term" value="P:cell division"/>
    <property type="evidence" value="ECO:0007669"/>
    <property type="project" value="UniProtKB-KW"/>
</dbReference>
<dbReference type="GO" id="GO:0031122">
    <property type="term" value="P:cytoplasmic microtubule organization"/>
    <property type="evidence" value="ECO:0000250"/>
    <property type="project" value="UniProtKB"/>
</dbReference>
<dbReference type="GO" id="GO:0000132">
    <property type="term" value="P:establishment of mitotic spindle orientation"/>
    <property type="evidence" value="ECO:0000250"/>
    <property type="project" value="UniProtKB"/>
</dbReference>
<dbReference type="GO" id="GO:0007097">
    <property type="term" value="P:nuclear migration"/>
    <property type="evidence" value="ECO:0000318"/>
    <property type="project" value="GO_Central"/>
</dbReference>
<dbReference type="GO" id="GO:0090316">
    <property type="term" value="P:positive regulation of intracellular protein transport"/>
    <property type="evidence" value="ECO:0000250"/>
    <property type="project" value="UniProtKB"/>
</dbReference>
<dbReference type="GO" id="GO:0060236">
    <property type="term" value="P:regulation of mitotic spindle organization"/>
    <property type="evidence" value="ECO:0000250"/>
    <property type="project" value="UniProtKB"/>
</dbReference>
<dbReference type="FunFam" id="2.30.30.190:FF:000003">
    <property type="entry name" value="dynactin subunit 1 isoform X1"/>
    <property type="match status" value="1"/>
</dbReference>
<dbReference type="Gene3D" id="2.30.30.190">
    <property type="entry name" value="CAP Gly-rich-like domain"/>
    <property type="match status" value="1"/>
</dbReference>
<dbReference type="InterPro" id="IPR036859">
    <property type="entry name" value="CAP-Gly_dom_sf"/>
</dbReference>
<dbReference type="InterPro" id="IPR000938">
    <property type="entry name" value="CAP-Gly_domain"/>
</dbReference>
<dbReference type="InterPro" id="IPR022157">
    <property type="entry name" value="Dynactin"/>
</dbReference>
<dbReference type="PANTHER" id="PTHR18916">
    <property type="entry name" value="DYNACTIN 1-RELATED MICROTUBULE-BINDING"/>
    <property type="match status" value="1"/>
</dbReference>
<dbReference type="PANTHER" id="PTHR18916:SF6">
    <property type="entry name" value="DYNACTIN SUBUNIT 1"/>
    <property type="match status" value="1"/>
</dbReference>
<dbReference type="Pfam" id="PF01302">
    <property type="entry name" value="CAP_GLY"/>
    <property type="match status" value="1"/>
</dbReference>
<dbReference type="Pfam" id="PF12455">
    <property type="entry name" value="Dynactin"/>
    <property type="match status" value="1"/>
</dbReference>
<dbReference type="SMART" id="SM01052">
    <property type="entry name" value="CAP_GLY"/>
    <property type="match status" value="1"/>
</dbReference>
<dbReference type="SUPFAM" id="SSF74924">
    <property type="entry name" value="Cap-Gly domain"/>
    <property type="match status" value="1"/>
</dbReference>
<dbReference type="PROSITE" id="PS00845">
    <property type="entry name" value="CAP_GLY_1"/>
    <property type="match status" value="1"/>
</dbReference>
<dbReference type="PROSITE" id="PS50245">
    <property type="entry name" value="CAP_GLY_2"/>
    <property type="match status" value="1"/>
</dbReference>
<proteinExistence type="evidence at protein level"/>